<gene>
    <name type="ordered locus">Lxx14910</name>
</gene>
<protein>
    <recommendedName>
        <fullName evidence="1">Putative glutamate--cysteine ligase 2</fullName>
        <ecNumber evidence="1">6.3.2.2</ecNumber>
    </recommendedName>
    <alternativeName>
        <fullName evidence="1">Gamma-glutamylcysteine synthetase 2</fullName>
        <shortName evidence="1">GCS 2</shortName>
        <shortName evidence="1">Gamma-GCS 2</shortName>
    </alternativeName>
</protein>
<dbReference type="EC" id="6.3.2.2" evidence="1"/>
<dbReference type="EMBL" id="AE016822">
    <property type="protein sequence ID" value="AAT89299.1"/>
    <property type="molecule type" value="Genomic_DNA"/>
</dbReference>
<dbReference type="RefSeq" id="WP_011186290.1">
    <property type="nucleotide sequence ID" value="NC_006087.1"/>
</dbReference>
<dbReference type="SMR" id="Q6AE97"/>
<dbReference type="STRING" id="281090.Lxx14910"/>
<dbReference type="KEGG" id="lxx:Lxx14910"/>
<dbReference type="eggNOG" id="COG2170">
    <property type="taxonomic scope" value="Bacteria"/>
</dbReference>
<dbReference type="HOGENOM" id="CLU_044848_1_0_11"/>
<dbReference type="Proteomes" id="UP000001306">
    <property type="component" value="Chromosome"/>
</dbReference>
<dbReference type="GO" id="GO:0005524">
    <property type="term" value="F:ATP binding"/>
    <property type="evidence" value="ECO:0007669"/>
    <property type="project" value="UniProtKB-KW"/>
</dbReference>
<dbReference type="GO" id="GO:0004357">
    <property type="term" value="F:glutamate-cysteine ligase activity"/>
    <property type="evidence" value="ECO:0007669"/>
    <property type="project" value="UniProtKB-EC"/>
</dbReference>
<dbReference type="GO" id="GO:0042398">
    <property type="term" value="P:modified amino acid biosynthetic process"/>
    <property type="evidence" value="ECO:0007669"/>
    <property type="project" value="InterPro"/>
</dbReference>
<dbReference type="Gene3D" id="3.30.590.20">
    <property type="match status" value="1"/>
</dbReference>
<dbReference type="HAMAP" id="MF_01609">
    <property type="entry name" value="Glu_cys_ligase_2"/>
    <property type="match status" value="1"/>
</dbReference>
<dbReference type="InterPro" id="IPR050141">
    <property type="entry name" value="GCL_type2/YbdK_subfam"/>
</dbReference>
<dbReference type="InterPro" id="IPR006336">
    <property type="entry name" value="GCS2"/>
</dbReference>
<dbReference type="InterPro" id="IPR014746">
    <property type="entry name" value="Gln_synth/guanido_kin_cat_dom"/>
</dbReference>
<dbReference type="InterPro" id="IPR011793">
    <property type="entry name" value="YbdK"/>
</dbReference>
<dbReference type="NCBIfam" id="TIGR02050">
    <property type="entry name" value="gshA_cyan_rel"/>
    <property type="match status" value="1"/>
</dbReference>
<dbReference type="NCBIfam" id="NF010042">
    <property type="entry name" value="PRK13517.1-2"/>
    <property type="match status" value="1"/>
</dbReference>
<dbReference type="NCBIfam" id="NF010043">
    <property type="entry name" value="PRK13517.1-3"/>
    <property type="match status" value="1"/>
</dbReference>
<dbReference type="NCBIfam" id="NF010044">
    <property type="entry name" value="PRK13517.1-4"/>
    <property type="match status" value="1"/>
</dbReference>
<dbReference type="PANTHER" id="PTHR36510">
    <property type="entry name" value="GLUTAMATE--CYSTEINE LIGASE 2-RELATED"/>
    <property type="match status" value="1"/>
</dbReference>
<dbReference type="PANTHER" id="PTHR36510:SF1">
    <property type="entry name" value="GLUTAMATE--CYSTEINE LIGASE 2-RELATED"/>
    <property type="match status" value="1"/>
</dbReference>
<dbReference type="Pfam" id="PF04107">
    <property type="entry name" value="GCS2"/>
    <property type="match status" value="1"/>
</dbReference>
<dbReference type="SUPFAM" id="SSF55931">
    <property type="entry name" value="Glutamine synthetase/guanido kinase"/>
    <property type="match status" value="1"/>
</dbReference>
<comment type="function">
    <text evidence="1">ATP-dependent carboxylate-amine ligase which exhibits weak glutamate--cysteine ligase activity.</text>
</comment>
<comment type="catalytic activity">
    <reaction evidence="1">
        <text>L-cysteine + L-glutamate + ATP = gamma-L-glutamyl-L-cysteine + ADP + phosphate + H(+)</text>
        <dbReference type="Rhea" id="RHEA:13285"/>
        <dbReference type="ChEBI" id="CHEBI:15378"/>
        <dbReference type="ChEBI" id="CHEBI:29985"/>
        <dbReference type="ChEBI" id="CHEBI:30616"/>
        <dbReference type="ChEBI" id="CHEBI:35235"/>
        <dbReference type="ChEBI" id="CHEBI:43474"/>
        <dbReference type="ChEBI" id="CHEBI:58173"/>
        <dbReference type="ChEBI" id="CHEBI:456216"/>
        <dbReference type="EC" id="6.3.2.2"/>
    </reaction>
</comment>
<comment type="similarity">
    <text evidence="1">Belongs to the glutamate--cysteine ligase type 2 family. YbdK subfamily.</text>
</comment>
<evidence type="ECO:0000255" key="1">
    <source>
        <dbReference type="HAMAP-Rule" id="MF_01609"/>
    </source>
</evidence>
<name>GCS2_LEIXX</name>
<reference key="1">
    <citation type="journal article" date="2004" name="Mol. Plant Microbe Interact.">
        <title>The genome sequence of the Gram-positive sugarcane pathogen Leifsonia xyli subsp. xyli.</title>
        <authorList>
            <person name="Monteiro-Vitorello C.B."/>
            <person name="Camargo L.E.A."/>
            <person name="Van Sluys M.A."/>
            <person name="Kitajima J.P."/>
            <person name="Truffi D."/>
            <person name="do Amaral A.M."/>
            <person name="Harakava R."/>
            <person name="de Oliveira J.C.F."/>
            <person name="Wood D."/>
            <person name="de Oliveira M.C."/>
            <person name="Miyaki C.Y."/>
            <person name="Takita M.A."/>
            <person name="da Silva A.C.R."/>
            <person name="Furlan L.R."/>
            <person name="Carraro D.M."/>
            <person name="Camarotte G."/>
            <person name="Almeida N.F. Jr."/>
            <person name="Carrer H."/>
            <person name="Coutinho L.L."/>
            <person name="El-Dorry H.A."/>
            <person name="Ferro M.I.T."/>
            <person name="Gagliardi P.R."/>
            <person name="Giglioti E."/>
            <person name="Goldman M.H.S."/>
            <person name="Goldman G.H."/>
            <person name="Kimura E.T."/>
            <person name="Ferro E.S."/>
            <person name="Kuramae E.E."/>
            <person name="Lemos E.G.M."/>
            <person name="Lemos M.V.F."/>
            <person name="Mauro S.M.Z."/>
            <person name="Machado M.A."/>
            <person name="Marino C.L."/>
            <person name="Menck C.F."/>
            <person name="Nunes L.R."/>
            <person name="Oliveira R.C."/>
            <person name="Pereira G.G."/>
            <person name="Siqueira W."/>
            <person name="de Souza A.A."/>
            <person name="Tsai S.M."/>
            <person name="Zanca A.S."/>
            <person name="Simpson A.J.G."/>
            <person name="Brumbley S.M."/>
            <person name="Setubal J.C."/>
        </authorList>
    </citation>
    <scope>NUCLEOTIDE SEQUENCE [LARGE SCALE GENOMIC DNA]</scope>
    <source>
        <strain>CTCB07</strain>
    </source>
</reference>
<organism>
    <name type="scientific">Leifsonia xyli subsp. xyli (strain CTCB07)</name>
    <dbReference type="NCBI Taxonomy" id="281090"/>
    <lineage>
        <taxon>Bacteria</taxon>
        <taxon>Bacillati</taxon>
        <taxon>Actinomycetota</taxon>
        <taxon>Actinomycetes</taxon>
        <taxon>Micrococcales</taxon>
        <taxon>Microbacteriaceae</taxon>
        <taxon>Leifsonia</taxon>
    </lineage>
</organism>
<accession>Q6AE97</accession>
<proteinExistence type="inferred from homology"/>
<sequence length="378" mass="41990">MQRLEFSESERSTVGIEWELALVDGATGDLVPIAKEVLGELGTSDGREHPQITHELLMNTVEVVSQVHRTVPAAIADLQELIGMVREVTDPRGVELMCAETHPFAQWYDQRITPSERYDRLLDRTQWWGRQMMIWGVHVHIGIDERDKALPIVNGLLTYYPHLQALSASSPFWAGANTGYASNRALMFQQLPTAGLPWQFGAWANYEEYVQDLVTTGVVTDHSEVRWDIRPSPKWGTVEMRACDGLSTADEVGAVAALIHCLTDQMLGELDDGVKPVTLQPWFVRENKWRAARYGLDAEVIVAPDGAERLVRDELAELTETLAPIAERLGCAEQLAQVHTILRTGASYQRQLAVAEANGGSLQEVVSSLTNELRNGLG</sequence>
<feature type="chain" id="PRO_0000218205" description="Putative glutamate--cysteine ligase 2">
    <location>
        <begin position="1"/>
        <end position="378"/>
    </location>
</feature>
<keyword id="KW-0067">ATP-binding</keyword>
<keyword id="KW-0436">Ligase</keyword>
<keyword id="KW-0547">Nucleotide-binding</keyword>
<keyword id="KW-1185">Reference proteome</keyword>